<dbReference type="EMBL" id="L42023">
    <property type="protein sequence ID" value="AAC21691.1"/>
    <property type="molecule type" value="Genomic_DNA"/>
</dbReference>
<dbReference type="PIR" id="F64042">
    <property type="entry name" value="F64042"/>
</dbReference>
<dbReference type="RefSeq" id="NP_438186.1">
    <property type="nucleotide sequence ID" value="NC_000907.1"/>
</dbReference>
<dbReference type="SMR" id="P43728"/>
<dbReference type="STRING" id="71421.HI_0013"/>
<dbReference type="EnsemblBacteria" id="AAC21691">
    <property type="protein sequence ID" value="AAC21691"/>
    <property type="gene ID" value="HI_0013"/>
</dbReference>
<dbReference type="KEGG" id="hin:HI_0013"/>
<dbReference type="PATRIC" id="fig|71421.8.peg.13"/>
<dbReference type="eggNOG" id="COG1159">
    <property type="taxonomic scope" value="Bacteria"/>
</dbReference>
<dbReference type="HOGENOM" id="CLU_038009_1_0_6"/>
<dbReference type="OrthoDB" id="9805918at2"/>
<dbReference type="PhylomeDB" id="P43728"/>
<dbReference type="BioCyc" id="HINF71421:G1GJ1-13-MONOMER"/>
<dbReference type="Proteomes" id="UP000000579">
    <property type="component" value="Chromosome"/>
</dbReference>
<dbReference type="GO" id="GO:0005829">
    <property type="term" value="C:cytosol"/>
    <property type="evidence" value="ECO:0000318"/>
    <property type="project" value="GO_Central"/>
</dbReference>
<dbReference type="GO" id="GO:0005886">
    <property type="term" value="C:plasma membrane"/>
    <property type="evidence" value="ECO:0007669"/>
    <property type="project" value="UniProtKB-SubCell"/>
</dbReference>
<dbReference type="GO" id="GO:0005525">
    <property type="term" value="F:GTP binding"/>
    <property type="evidence" value="ECO:0007669"/>
    <property type="project" value="UniProtKB-UniRule"/>
</dbReference>
<dbReference type="GO" id="GO:0003924">
    <property type="term" value="F:GTPase activity"/>
    <property type="evidence" value="ECO:0007669"/>
    <property type="project" value="UniProtKB-UniRule"/>
</dbReference>
<dbReference type="GO" id="GO:0043024">
    <property type="term" value="F:ribosomal small subunit binding"/>
    <property type="evidence" value="ECO:0000318"/>
    <property type="project" value="GO_Central"/>
</dbReference>
<dbReference type="GO" id="GO:0019843">
    <property type="term" value="F:rRNA binding"/>
    <property type="evidence" value="ECO:0000318"/>
    <property type="project" value="GO_Central"/>
</dbReference>
<dbReference type="GO" id="GO:0070181">
    <property type="term" value="F:small ribosomal subunit rRNA binding"/>
    <property type="evidence" value="ECO:0007669"/>
    <property type="project" value="UniProtKB-UniRule"/>
</dbReference>
<dbReference type="GO" id="GO:0000028">
    <property type="term" value="P:ribosomal small subunit assembly"/>
    <property type="evidence" value="ECO:0000318"/>
    <property type="project" value="GO_Central"/>
</dbReference>
<dbReference type="CDD" id="cd04163">
    <property type="entry name" value="Era"/>
    <property type="match status" value="1"/>
</dbReference>
<dbReference type="CDD" id="cd22534">
    <property type="entry name" value="KH-II_Era"/>
    <property type="match status" value="1"/>
</dbReference>
<dbReference type="FunFam" id="3.30.300.20:FF:000003">
    <property type="entry name" value="GTPase Era"/>
    <property type="match status" value="1"/>
</dbReference>
<dbReference type="FunFam" id="3.40.50.300:FF:000094">
    <property type="entry name" value="GTPase Era"/>
    <property type="match status" value="1"/>
</dbReference>
<dbReference type="Gene3D" id="3.30.300.20">
    <property type="match status" value="1"/>
</dbReference>
<dbReference type="Gene3D" id="3.40.50.300">
    <property type="entry name" value="P-loop containing nucleotide triphosphate hydrolases"/>
    <property type="match status" value="1"/>
</dbReference>
<dbReference type="HAMAP" id="MF_00367">
    <property type="entry name" value="GTPase_Era"/>
    <property type="match status" value="1"/>
</dbReference>
<dbReference type="InterPro" id="IPR030388">
    <property type="entry name" value="G_ERA_dom"/>
</dbReference>
<dbReference type="InterPro" id="IPR006073">
    <property type="entry name" value="GTP-bd"/>
</dbReference>
<dbReference type="InterPro" id="IPR005662">
    <property type="entry name" value="GTPase_Era-like"/>
</dbReference>
<dbReference type="InterPro" id="IPR015946">
    <property type="entry name" value="KH_dom-like_a/b"/>
</dbReference>
<dbReference type="InterPro" id="IPR004044">
    <property type="entry name" value="KH_dom_type_2"/>
</dbReference>
<dbReference type="InterPro" id="IPR009019">
    <property type="entry name" value="KH_sf_prok-type"/>
</dbReference>
<dbReference type="InterPro" id="IPR027417">
    <property type="entry name" value="P-loop_NTPase"/>
</dbReference>
<dbReference type="InterPro" id="IPR005225">
    <property type="entry name" value="Small_GTP-bd"/>
</dbReference>
<dbReference type="NCBIfam" id="TIGR00436">
    <property type="entry name" value="era"/>
    <property type="match status" value="1"/>
</dbReference>
<dbReference type="NCBIfam" id="NF000908">
    <property type="entry name" value="PRK00089.1"/>
    <property type="match status" value="1"/>
</dbReference>
<dbReference type="NCBIfam" id="TIGR00231">
    <property type="entry name" value="small_GTP"/>
    <property type="match status" value="1"/>
</dbReference>
<dbReference type="PANTHER" id="PTHR42698">
    <property type="entry name" value="GTPASE ERA"/>
    <property type="match status" value="1"/>
</dbReference>
<dbReference type="PANTHER" id="PTHR42698:SF1">
    <property type="entry name" value="GTPASE ERA, MITOCHONDRIAL"/>
    <property type="match status" value="1"/>
</dbReference>
<dbReference type="Pfam" id="PF07650">
    <property type="entry name" value="KH_2"/>
    <property type="match status" value="1"/>
</dbReference>
<dbReference type="Pfam" id="PF01926">
    <property type="entry name" value="MMR_HSR1"/>
    <property type="match status" value="1"/>
</dbReference>
<dbReference type="PRINTS" id="PR00326">
    <property type="entry name" value="GTP1OBG"/>
</dbReference>
<dbReference type="SUPFAM" id="SSF52540">
    <property type="entry name" value="P-loop containing nucleoside triphosphate hydrolases"/>
    <property type="match status" value="1"/>
</dbReference>
<dbReference type="SUPFAM" id="SSF54814">
    <property type="entry name" value="Prokaryotic type KH domain (KH-domain type II)"/>
    <property type="match status" value="1"/>
</dbReference>
<dbReference type="PROSITE" id="PS51713">
    <property type="entry name" value="G_ERA"/>
    <property type="match status" value="1"/>
</dbReference>
<dbReference type="PROSITE" id="PS50823">
    <property type="entry name" value="KH_TYPE_2"/>
    <property type="match status" value="1"/>
</dbReference>
<accession>P43728</accession>
<gene>
    <name evidence="1" type="primary">era</name>
    <name type="ordered locus">HI_0013</name>
</gene>
<feature type="chain" id="PRO_0000180017" description="GTPase Era">
    <location>
        <begin position="1"/>
        <end position="302"/>
    </location>
</feature>
<feature type="domain" description="Era-type G" evidence="2">
    <location>
        <begin position="9"/>
        <end position="177"/>
    </location>
</feature>
<feature type="domain" description="KH type-2" evidence="1">
    <location>
        <begin position="208"/>
        <end position="285"/>
    </location>
</feature>
<feature type="region of interest" description="G1" evidence="2">
    <location>
        <begin position="17"/>
        <end position="24"/>
    </location>
</feature>
<feature type="region of interest" description="G2" evidence="2">
    <location>
        <begin position="43"/>
        <end position="47"/>
    </location>
</feature>
<feature type="region of interest" description="G3" evidence="2">
    <location>
        <begin position="64"/>
        <end position="67"/>
    </location>
</feature>
<feature type="region of interest" description="G4" evidence="2">
    <location>
        <begin position="126"/>
        <end position="129"/>
    </location>
</feature>
<feature type="region of interest" description="G5" evidence="2">
    <location>
        <begin position="156"/>
        <end position="158"/>
    </location>
</feature>
<feature type="binding site" evidence="1">
    <location>
        <begin position="17"/>
        <end position="24"/>
    </location>
    <ligand>
        <name>GTP</name>
        <dbReference type="ChEBI" id="CHEBI:37565"/>
    </ligand>
</feature>
<feature type="binding site" evidence="1">
    <location>
        <begin position="64"/>
        <end position="68"/>
    </location>
    <ligand>
        <name>GTP</name>
        <dbReference type="ChEBI" id="CHEBI:37565"/>
    </ligand>
</feature>
<feature type="binding site" evidence="1">
    <location>
        <begin position="126"/>
        <end position="129"/>
    </location>
    <ligand>
        <name>GTP</name>
        <dbReference type="ChEBI" id="CHEBI:37565"/>
    </ligand>
</feature>
<name>ERA_HAEIN</name>
<protein>
    <recommendedName>
        <fullName evidence="1">GTPase Era</fullName>
    </recommendedName>
</protein>
<sequence>MTEQFDKTYCGFIAIVGRPNVGKSTLLNKILGQKISITSRKAQTTRHRIVGIKTEGAYQEIYVDTPGLHIEEKRAINRLMNRAASSAIGDVDLIIFVVDGTHWNADDEMVLNKLRNAKAPVVLAINKVDNIKNKDDLLPFITDLSSKFNFAHIVPISAQRGNNVHELEKIVRQSLREGVHHFPEDYVTDRSQRFMASEIIREKLMRFTGEELPYSVTVEIEQFKVNERGTYEINGLILVEREGQKKMVIGAGGQKIKTIGMEARADMERLFDNKVHLELWVKVKSGWADDERALRSLGYMDE</sequence>
<reference key="1">
    <citation type="journal article" date="1995" name="Science">
        <title>Whole-genome random sequencing and assembly of Haemophilus influenzae Rd.</title>
        <authorList>
            <person name="Fleischmann R.D."/>
            <person name="Adams M.D."/>
            <person name="White O."/>
            <person name="Clayton R.A."/>
            <person name="Kirkness E.F."/>
            <person name="Kerlavage A.R."/>
            <person name="Bult C.J."/>
            <person name="Tomb J.-F."/>
            <person name="Dougherty B.A."/>
            <person name="Merrick J.M."/>
            <person name="McKenney K."/>
            <person name="Sutton G.G."/>
            <person name="FitzHugh W."/>
            <person name="Fields C.A."/>
            <person name="Gocayne J.D."/>
            <person name="Scott J.D."/>
            <person name="Shirley R."/>
            <person name="Liu L.-I."/>
            <person name="Glodek A."/>
            <person name="Kelley J.M."/>
            <person name="Weidman J.F."/>
            <person name="Phillips C.A."/>
            <person name="Spriggs T."/>
            <person name="Hedblom E."/>
            <person name="Cotton M.D."/>
            <person name="Utterback T.R."/>
            <person name="Hanna M.C."/>
            <person name="Nguyen D.T."/>
            <person name="Saudek D.M."/>
            <person name="Brandon R.C."/>
            <person name="Fine L.D."/>
            <person name="Fritchman J.L."/>
            <person name="Fuhrmann J.L."/>
            <person name="Geoghagen N.S.M."/>
            <person name="Gnehm C.L."/>
            <person name="McDonald L.A."/>
            <person name="Small K.V."/>
            <person name="Fraser C.M."/>
            <person name="Smith H.O."/>
            <person name="Venter J.C."/>
        </authorList>
    </citation>
    <scope>NUCLEOTIDE SEQUENCE [LARGE SCALE GENOMIC DNA]</scope>
    <source>
        <strain>ATCC 51907 / DSM 11121 / KW20 / Rd</strain>
    </source>
</reference>
<proteinExistence type="inferred from homology"/>
<organism>
    <name type="scientific">Haemophilus influenzae (strain ATCC 51907 / DSM 11121 / KW20 / Rd)</name>
    <dbReference type="NCBI Taxonomy" id="71421"/>
    <lineage>
        <taxon>Bacteria</taxon>
        <taxon>Pseudomonadati</taxon>
        <taxon>Pseudomonadota</taxon>
        <taxon>Gammaproteobacteria</taxon>
        <taxon>Pasteurellales</taxon>
        <taxon>Pasteurellaceae</taxon>
        <taxon>Haemophilus</taxon>
    </lineage>
</organism>
<evidence type="ECO:0000255" key="1">
    <source>
        <dbReference type="HAMAP-Rule" id="MF_00367"/>
    </source>
</evidence>
<evidence type="ECO:0000255" key="2">
    <source>
        <dbReference type="PROSITE-ProRule" id="PRU01050"/>
    </source>
</evidence>
<keyword id="KW-0997">Cell inner membrane</keyword>
<keyword id="KW-1003">Cell membrane</keyword>
<keyword id="KW-0963">Cytoplasm</keyword>
<keyword id="KW-0342">GTP-binding</keyword>
<keyword id="KW-0472">Membrane</keyword>
<keyword id="KW-0547">Nucleotide-binding</keyword>
<keyword id="KW-1185">Reference proteome</keyword>
<keyword id="KW-0690">Ribosome biogenesis</keyword>
<keyword id="KW-0694">RNA-binding</keyword>
<keyword id="KW-0699">rRNA-binding</keyword>
<comment type="function">
    <text evidence="1">An essential GTPase that binds both GDP and GTP, with rapid nucleotide exchange. Plays a role in 16S rRNA processing and 30S ribosomal subunit biogenesis and possibly also in cell cycle regulation and energy metabolism.</text>
</comment>
<comment type="subunit">
    <text evidence="1">Monomer.</text>
</comment>
<comment type="subcellular location">
    <subcellularLocation>
        <location>Cytoplasm</location>
    </subcellularLocation>
    <subcellularLocation>
        <location evidence="1">Cell inner membrane</location>
        <topology evidence="1">Peripheral membrane protein</topology>
    </subcellularLocation>
</comment>
<comment type="similarity">
    <text evidence="1 2">Belongs to the TRAFAC class TrmE-Era-EngA-EngB-Septin-like GTPase superfamily. Era GTPase family.</text>
</comment>